<gene>
    <name evidence="1" type="primary">tmk</name>
    <name type="ordered locus">AM111</name>
</gene>
<proteinExistence type="inferred from homology"/>
<accession>Q5PBS1</accession>
<name>KTHY_ANAMM</name>
<reference key="1">
    <citation type="journal article" date="2005" name="Proc. Natl. Acad. Sci. U.S.A.">
        <title>Complete genome sequencing of Anaplasma marginale reveals that the surface is skewed to two superfamilies of outer membrane proteins.</title>
        <authorList>
            <person name="Brayton K.A."/>
            <person name="Kappmeyer L.S."/>
            <person name="Herndon D.R."/>
            <person name="Dark M.J."/>
            <person name="Tibbals D.L."/>
            <person name="Palmer G.H."/>
            <person name="McGuire T.C."/>
            <person name="Knowles D.P. Jr."/>
        </authorList>
    </citation>
    <scope>NUCLEOTIDE SEQUENCE [LARGE SCALE GENOMIC DNA]</scope>
    <source>
        <strain>St. Maries</strain>
    </source>
</reference>
<comment type="function">
    <text evidence="1">Phosphorylation of dTMP to form dTDP in both de novo and salvage pathways of dTTP synthesis.</text>
</comment>
<comment type="catalytic activity">
    <reaction evidence="1">
        <text>dTMP + ATP = dTDP + ADP</text>
        <dbReference type="Rhea" id="RHEA:13517"/>
        <dbReference type="ChEBI" id="CHEBI:30616"/>
        <dbReference type="ChEBI" id="CHEBI:58369"/>
        <dbReference type="ChEBI" id="CHEBI:63528"/>
        <dbReference type="ChEBI" id="CHEBI:456216"/>
        <dbReference type="EC" id="2.7.4.9"/>
    </reaction>
</comment>
<comment type="similarity">
    <text evidence="1">Belongs to the thymidylate kinase family.</text>
</comment>
<dbReference type="EC" id="2.7.4.9" evidence="1"/>
<dbReference type="EMBL" id="CP000030">
    <property type="protein sequence ID" value="AAV86258.1"/>
    <property type="molecule type" value="Genomic_DNA"/>
</dbReference>
<dbReference type="RefSeq" id="WP_011114115.1">
    <property type="nucleotide sequence ID" value="NC_004842.2"/>
</dbReference>
<dbReference type="SMR" id="Q5PBS1"/>
<dbReference type="KEGG" id="ama:AM111"/>
<dbReference type="HOGENOM" id="CLU_049131_0_0_5"/>
<dbReference type="GO" id="GO:0005829">
    <property type="term" value="C:cytosol"/>
    <property type="evidence" value="ECO:0007669"/>
    <property type="project" value="TreeGrafter"/>
</dbReference>
<dbReference type="GO" id="GO:0005524">
    <property type="term" value="F:ATP binding"/>
    <property type="evidence" value="ECO:0007669"/>
    <property type="project" value="UniProtKB-UniRule"/>
</dbReference>
<dbReference type="GO" id="GO:0004798">
    <property type="term" value="F:dTMP kinase activity"/>
    <property type="evidence" value="ECO:0007669"/>
    <property type="project" value="UniProtKB-UniRule"/>
</dbReference>
<dbReference type="GO" id="GO:0006233">
    <property type="term" value="P:dTDP biosynthetic process"/>
    <property type="evidence" value="ECO:0007669"/>
    <property type="project" value="InterPro"/>
</dbReference>
<dbReference type="GO" id="GO:0006235">
    <property type="term" value="P:dTTP biosynthetic process"/>
    <property type="evidence" value="ECO:0007669"/>
    <property type="project" value="UniProtKB-UniRule"/>
</dbReference>
<dbReference type="GO" id="GO:0006227">
    <property type="term" value="P:dUDP biosynthetic process"/>
    <property type="evidence" value="ECO:0007669"/>
    <property type="project" value="TreeGrafter"/>
</dbReference>
<dbReference type="CDD" id="cd01672">
    <property type="entry name" value="TMPK"/>
    <property type="match status" value="1"/>
</dbReference>
<dbReference type="FunFam" id="3.40.50.300:FF:000225">
    <property type="entry name" value="Thymidylate kinase"/>
    <property type="match status" value="1"/>
</dbReference>
<dbReference type="Gene3D" id="3.40.50.300">
    <property type="entry name" value="P-loop containing nucleotide triphosphate hydrolases"/>
    <property type="match status" value="1"/>
</dbReference>
<dbReference type="HAMAP" id="MF_00165">
    <property type="entry name" value="Thymidylate_kinase"/>
    <property type="match status" value="1"/>
</dbReference>
<dbReference type="InterPro" id="IPR027417">
    <property type="entry name" value="P-loop_NTPase"/>
</dbReference>
<dbReference type="InterPro" id="IPR039430">
    <property type="entry name" value="Thymidylate_kin-like_dom"/>
</dbReference>
<dbReference type="InterPro" id="IPR018095">
    <property type="entry name" value="Thymidylate_kin_CS"/>
</dbReference>
<dbReference type="InterPro" id="IPR018094">
    <property type="entry name" value="Thymidylate_kinase"/>
</dbReference>
<dbReference type="NCBIfam" id="TIGR00041">
    <property type="entry name" value="DTMP_kinase"/>
    <property type="match status" value="1"/>
</dbReference>
<dbReference type="PANTHER" id="PTHR10344">
    <property type="entry name" value="THYMIDYLATE KINASE"/>
    <property type="match status" value="1"/>
</dbReference>
<dbReference type="PANTHER" id="PTHR10344:SF4">
    <property type="entry name" value="UMP-CMP KINASE 2, MITOCHONDRIAL"/>
    <property type="match status" value="1"/>
</dbReference>
<dbReference type="Pfam" id="PF02223">
    <property type="entry name" value="Thymidylate_kin"/>
    <property type="match status" value="1"/>
</dbReference>
<dbReference type="SUPFAM" id="SSF52540">
    <property type="entry name" value="P-loop containing nucleoside triphosphate hydrolases"/>
    <property type="match status" value="1"/>
</dbReference>
<dbReference type="PROSITE" id="PS01331">
    <property type="entry name" value="THYMIDYLATE_KINASE"/>
    <property type="match status" value="1"/>
</dbReference>
<organism>
    <name type="scientific">Anaplasma marginale (strain St. Maries)</name>
    <dbReference type="NCBI Taxonomy" id="234826"/>
    <lineage>
        <taxon>Bacteria</taxon>
        <taxon>Pseudomonadati</taxon>
        <taxon>Pseudomonadota</taxon>
        <taxon>Alphaproteobacteria</taxon>
        <taxon>Rickettsiales</taxon>
        <taxon>Anaplasmataceae</taxon>
        <taxon>Anaplasma</taxon>
    </lineage>
</organism>
<protein>
    <recommendedName>
        <fullName evidence="1">Thymidylate kinase</fullName>
        <ecNumber evidence="1">2.7.4.9</ecNumber>
    </recommendedName>
    <alternativeName>
        <fullName evidence="1">dTMP kinase</fullName>
    </alternativeName>
</protein>
<keyword id="KW-0067">ATP-binding</keyword>
<keyword id="KW-0418">Kinase</keyword>
<keyword id="KW-0545">Nucleotide biosynthesis</keyword>
<keyword id="KW-0547">Nucleotide-binding</keyword>
<keyword id="KW-0808">Transferase</keyword>
<evidence type="ECO:0000255" key="1">
    <source>
        <dbReference type="HAMAP-Rule" id="MF_00165"/>
    </source>
</evidence>
<sequence length="211" mass="23205">MFITFEGIDGCGKTTQAVLLAKYLSDLYGEHRVVLTREPGGTSLNELIRGALLGLTDYKLDGITELMLFIAMRRESFVKVVLPGLLAGKIVISDRFTDSTVAYQGYGCGVDLALVGMLNSLVADVVPDITFVIDASIELALARTSLNGFENHGPEFYDRVREGFRTIVANNPHRCHMIDCKSDAAEDVYSTHDRIVALFRAITQDKLKVAK</sequence>
<feature type="chain" id="PRO_1000023142" description="Thymidylate kinase">
    <location>
        <begin position="1"/>
        <end position="211"/>
    </location>
</feature>
<feature type="binding site" evidence="1">
    <location>
        <begin position="7"/>
        <end position="14"/>
    </location>
    <ligand>
        <name>ATP</name>
        <dbReference type="ChEBI" id="CHEBI:30616"/>
    </ligand>
</feature>